<organism>
    <name type="scientific">Schizosaccharomyces pombe (strain 972 / ATCC 24843)</name>
    <name type="common">Fission yeast</name>
    <dbReference type="NCBI Taxonomy" id="284812"/>
    <lineage>
        <taxon>Eukaryota</taxon>
        <taxon>Fungi</taxon>
        <taxon>Dikarya</taxon>
        <taxon>Ascomycota</taxon>
        <taxon>Taphrinomycotina</taxon>
        <taxon>Schizosaccharomycetes</taxon>
        <taxon>Schizosaccharomycetales</taxon>
        <taxon>Schizosaccharomycetaceae</taxon>
        <taxon>Schizosaccharomyces</taxon>
    </lineage>
</organism>
<protein>
    <recommendedName>
        <fullName evidence="2">Obg-like ATPase 1</fullName>
    </recommendedName>
</protein>
<feature type="chain" id="PRO_0000356254" description="Obg-like ATPase 1">
    <location>
        <begin position="1"/>
        <end position="392"/>
    </location>
</feature>
<feature type="domain" description="OBG-type G">
    <location>
        <begin position="21"/>
        <end position="285"/>
    </location>
</feature>
<feature type="domain" description="TGS" evidence="3">
    <location>
        <begin position="306"/>
        <end position="389"/>
    </location>
</feature>
<feature type="binding site" evidence="2">
    <location>
        <begin position="30"/>
        <end position="35"/>
    </location>
    <ligand>
        <name>ATP</name>
        <dbReference type="ChEBI" id="CHEBI:30616"/>
    </ligand>
</feature>
<feature type="binding site" evidence="1">
    <location>
        <position position="34"/>
    </location>
    <ligand>
        <name>Mg(2+)</name>
        <dbReference type="ChEBI" id="CHEBI:18420"/>
    </ligand>
</feature>
<feature type="binding site" evidence="1">
    <location>
        <position position="55"/>
    </location>
    <ligand>
        <name>Mg(2+)</name>
        <dbReference type="ChEBI" id="CHEBI:18420"/>
    </ligand>
</feature>
<feature type="binding site" evidence="2">
    <location>
        <position position="233"/>
    </location>
    <ligand>
        <name>ATP</name>
        <dbReference type="ChEBI" id="CHEBI:30616"/>
    </ligand>
</feature>
<feature type="strand" evidence="6">
    <location>
        <begin position="15"/>
        <end position="19"/>
    </location>
</feature>
<feature type="strand" evidence="6">
    <location>
        <begin position="22"/>
        <end position="27"/>
    </location>
</feature>
<feature type="strand" evidence="6">
    <location>
        <begin position="29"/>
        <end position="32"/>
    </location>
</feature>
<feature type="helix" evidence="6">
    <location>
        <begin position="33"/>
        <end position="42"/>
    </location>
</feature>
<feature type="turn" evidence="6">
    <location>
        <begin position="44"/>
        <end position="46"/>
    </location>
</feature>
<feature type="strand" evidence="6">
    <location>
        <begin position="60"/>
        <end position="65"/>
    </location>
</feature>
<feature type="helix" evidence="6">
    <location>
        <begin position="68"/>
        <end position="77"/>
    </location>
</feature>
<feature type="strand" evidence="6">
    <location>
        <begin position="80"/>
        <end position="83"/>
    </location>
</feature>
<feature type="strand" evidence="6">
    <location>
        <begin position="85"/>
        <end position="90"/>
    </location>
</feature>
<feature type="helix" evidence="6">
    <location>
        <begin position="93"/>
        <end position="95"/>
    </location>
</feature>
<feature type="strand" evidence="6">
    <location>
        <begin position="101"/>
        <end position="105"/>
    </location>
</feature>
<feature type="helix" evidence="6">
    <location>
        <begin position="107"/>
        <end position="113"/>
    </location>
</feature>
<feature type="strand" evidence="6">
    <location>
        <begin position="117"/>
        <end position="124"/>
    </location>
</feature>
<feature type="strand" evidence="6">
    <location>
        <begin position="135"/>
        <end position="138"/>
    </location>
</feature>
<feature type="helix" evidence="6">
    <location>
        <begin position="140"/>
        <end position="168"/>
    </location>
</feature>
<feature type="strand" evidence="6">
    <location>
        <begin position="176"/>
        <end position="178"/>
    </location>
</feature>
<feature type="helix" evidence="6">
    <location>
        <begin position="179"/>
        <end position="197"/>
    </location>
</feature>
<feature type="helix" evidence="6">
    <location>
        <begin position="203"/>
        <end position="205"/>
    </location>
</feature>
<feature type="helix" evidence="6">
    <location>
        <begin position="210"/>
        <end position="217"/>
    </location>
</feature>
<feature type="helix" evidence="6">
    <location>
        <begin position="222"/>
        <end position="224"/>
    </location>
</feature>
<feature type="strand" evidence="6">
    <location>
        <begin position="227"/>
        <end position="232"/>
    </location>
</feature>
<feature type="helix" evidence="6">
    <location>
        <begin position="235"/>
        <end position="238"/>
    </location>
</feature>
<feature type="turn" evidence="6">
    <location>
        <begin position="239"/>
        <end position="241"/>
    </location>
</feature>
<feature type="helix" evidence="6">
    <location>
        <begin position="246"/>
        <end position="254"/>
    </location>
</feature>
<feature type="strand" evidence="6">
    <location>
        <begin position="262"/>
        <end position="265"/>
    </location>
</feature>
<feature type="helix" evidence="6">
    <location>
        <begin position="267"/>
        <end position="273"/>
    </location>
</feature>
<feature type="helix" evidence="6">
    <location>
        <begin position="278"/>
        <end position="287"/>
    </location>
</feature>
<feature type="helix" evidence="6">
    <location>
        <begin position="294"/>
        <end position="304"/>
    </location>
</feature>
<feature type="strand" evidence="6">
    <location>
        <begin position="307"/>
        <end position="312"/>
    </location>
</feature>
<feature type="strand" evidence="6">
    <location>
        <begin position="315"/>
        <end position="324"/>
    </location>
</feature>
<feature type="helix" evidence="6">
    <location>
        <begin position="329"/>
        <end position="336"/>
    </location>
</feature>
<feature type="helix" evidence="6">
    <location>
        <begin position="338"/>
        <end position="342"/>
    </location>
</feature>
<feature type="strand" evidence="6">
    <location>
        <begin position="345"/>
        <end position="350"/>
    </location>
</feature>
<feature type="helix" evidence="6">
    <location>
        <begin position="352"/>
        <end position="358"/>
    </location>
</feature>
<feature type="helix" evidence="6">
    <location>
        <begin position="361"/>
        <end position="366"/>
    </location>
</feature>
<feature type="strand" evidence="6">
    <location>
        <begin position="372"/>
        <end position="374"/>
    </location>
</feature>
<feature type="strand" evidence="6">
    <location>
        <begin position="384"/>
        <end position="386"/>
    </location>
</feature>
<comment type="function">
    <text evidence="2 5">Hydrolyzes ATP, and can also hydrolyze GTP with lower efficiency. Has lower affinity for GTP (By similarity). Negatively regulates the G2/M transition in the cell cycle.</text>
</comment>
<comment type="cofactor">
    <cofactor evidence="1">
        <name>Mg(2+)</name>
        <dbReference type="ChEBI" id="CHEBI:18420"/>
    </cofactor>
</comment>
<comment type="subunit">
    <text evidence="2">Monomer.</text>
</comment>
<comment type="subcellular location">
    <subcellularLocation>
        <location evidence="2 4">Cytoplasm</location>
    </subcellularLocation>
    <subcellularLocation>
        <location evidence="2 4">Nucleus</location>
    </subcellularLocation>
</comment>
<comment type="similarity">
    <text evidence="2">Belongs to the TRAFAC class OBG-HflX-like GTPase superfamily. OBG GTPase family. YchF/OLA1 subfamily.</text>
</comment>
<accession>O13998</accession>
<dbReference type="EMBL" id="CU329670">
    <property type="protein sequence ID" value="CAB11677.1"/>
    <property type="molecule type" value="Genomic_DNA"/>
</dbReference>
<dbReference type="PIR" id="T38450">
    <property type="entry name" value="T38450"/>
</dbReference>
<dbReference type="RefSeq" id="NP_594403.1">
    <property type="nucleotide sequence ID" value="NM_001019834.2"/>
</dbReference>
<dbReference type="PDB" id="1NI3">
    <property type="method" value="X-ray"/>
    <property type="resolution" value="2.80 A"/>
    <property type="chains" value="A=1-392"/>
</dbReference>
<dbReference type="PDBsum" id="1NI3"/>
<dbReference type="SMR" id="O13998"/>
<dbReference type="BioGRID" id="277939">
    <property type="interactions" value="11"/>
</dbReference>
<dbReference type="FunCoup" id="O13998">
    <property type="interactions" value="641"/>
</dbReference>
<dbReference type="STRING" id="284812.O13998"/>
<dbReference type="iPTMnet" id="O13998"/>
<dbReference type="PaxDb" id="4896-SPAC27E2.03c.1"/>
<dbReference type="EnsemblFungi" id="SPAC27E2.03c.1">
    <property type="protein sequence ID" value="SPAC27E2.03c.1:pep"/>
    <property type="gene ID" value="SPAC27E2.03c"/>
</dbReference>
<dbReference type="PomBase" id="SPAC27E2.03c"/>
<dbReference type="VEuPathDB" id="FungiDB:SPAC27E2.03c"/>
<dbReference type="eggNOG" id="KOG1491">
    <property type="taxonomic scope" value="Eukaryota"/>
</dbReference>
<dbReference type="HOGENOM" id="CLU_018395_1_2_1"/>
<dbReference type="InParanoid" id="O13998"/>
<dbReference type="OMA" id="VLRCFDN"/>
<dbReference type="PhylomeDB" id="O13998"/>
<dbReference type="Reactome" id="R-SPO-114608">
    <property type="pathway name" value="Platelet degranulation"/>
</dbReference>
<dbReference type="EvolutionaryTrace" id="O13998"/>
<dbReference type="PRO" id="PR:O13998"/>
<dbReference type="Proteomes" id="UP000002485">
    <property type="component" value="Chromosome I"/>
</dbReference>
<dbReference type="GO" id="GO:0005737">
    <property type="term" value="C:cytoplasm"/>
    <property type="evidence" value="ECO:0000318"/>
    <property type="project" value="GO_Central"/>
</dbReference>
<dbReference type="GO" id="GO:0005829">
    <property type="term" value="C:cytosol"/>
    <property type="evidence" value="ECO:0007005"/>
    <property type="project" value="PomBase"/>
</dbReference>
<dbReference type="GO" id="GO:0005634">
    <property type="term" value="C:nucleus"/>
    <property type="evidence" value="ECO:0007005"/>
    <property type="project" value="PomBase"/>
</dbReference>
<dbReference type="GO" id="GO:0005524">
    <property type="term" value="F:ATP binding"/>
    <property type="evidence" value="ECO:0007669"/>
    <property type="project" value="UniProtKB-UniRule"/>
</dbReference>
<dbReference type="GO" id="GO:0016887">
    <property type="term" value="F:ATP hydrolysis activity"/>
    <property type="evidence" value="ECO:0000318"/>
    <property type="project" value="GO_Central"/>
</dbReference>
<dbReference type="GO" id="GO:0005525">
    <property type="term" value="F:GTP binding"/>
    <property type="evidence" value="ECO:0000303"/>
    <property type="project" value="PomBase"/>
</dbReference>
<dbReference type="GO" id="GO:0046872">
    <property type="term" value="F:metal ion binding"/>
    <property type="evidence" value="ECO:0007669"/>
    <property type="project" value="UniProtKB-KW"/>
</dbReference>
<dbReference type="GO" id="GO:0043023">
    <property type="term" value="F:ribosomal large subunit binding"/>
    <property type="evidence" value="ECO:0007669"/>
    <property type="project" value="UniProtKB-UniRule"/>
</dbReference>
<dbReference type="CDD" id="cd04867">
    <property type="entry name" value="TGS_YchF_OLA1"/>
    <property type="match status" value="1"/>
</dbReference>
<dbReference type="CDD" id="cd01900">
    <property type="entry name" value="YchF"/>
    <property type="match status" value="1"/>
</dbReference>
<dbReference type="FunFam" id="1.10.150.300:FF:000001">
    <property type="entry name" value="Ribosome-binding ATPase YchF"/>
    <property type="match status" value="1"/>
</dbReference>
<dbReference type="FunFam" id="3.10.20.30:FF:000001">
    <property type="entry name" value="Ribosome-binding ATPase YchF"/>
    <property type="match status" value="1"/>
</dbReference>
<dbReference type="Gene3D" id="3.10.20.30">
    <property type="match status" value="1"/>
</dbReference>
<dbReference type="Gene3D" id="3.40.50.300">
    <property type="entry name" value="P-loop containing nucleotide triphosphate hydrolases"/>
    <property type="match status" value="1"/>
</dbReference>
<dbReference type="Gene3D" id="1.10.150.300">
    <property type="entry name" value="TGS-like domain"/>
    <property type="match status" value="1"/>
</dbReference>
<dbReference type="HAMAP" id="MF_00944">
    <property type="entry name" value="YchF_OLA1_ATPase"/>
    <property type="match status" value="1"/>
</dbReference>
<dbReference type="InterPro" id="IPR004396">
    <property type="entry name" value="ATPase_YchF/OLA1"/>
</dbReference>
<dbReference type="InterPro" id="IPR012675">
    <property type="entry name" value="Beta-grasp_dom_sf"/>
</dbReference>
<dbReference type="InterPro" id="IPR031167">
    <property type="entry name" value="G_OBG"/>
</dbReference>
<dbReference type="InterPro" id="IPR006073">
    <property type="entry name" value="GTP-bd"/>
</dbReference>
<dbReference type="InterPro" id="IPR027417">
    <property type="entry name" value="P-loop_NTPase"/>
</dbReference>
<dbReference type="InterPro" id="IPR004095">
    <property type="entry name" value="TGS"/>
</dbReference>
<dbReference type="InterPro" id="IPR012676">
    <property type="entry name" value="TGS-like"/>
</dbReference>
<dbReference type="InterPro" id="IPR023192">
    <property type="entry name" value="TGS-like_dom_sf"/>
</dbReference>
<dbReference type="InterPro" id="IPR013029">
    <property type="entry name" value="YchF_C"/>
</dbReference>
<dbReference type="InterPro" id="IPR041706">
    <property type="entry name" value="YchF_N"/>
</dbReference>
<dbReference type="NCBIfam" id="TIGR00092">
    <property type="entry name" value="redox-regulated ATPase YchF"/>
    <property type="match status" value="1"/>
</dbReference>
<dbReference type="PANTHER" id="PTHR23305">
    <property type="entry name" value="OBG GTPASE FAMILY"/>
    <property type="match status" value="1"/>
</dbReference>
<dbReference type="PANTHER" id="PTHR23305:SF11">
    <property type="entry name" value="OBG-LIKE ATPASE 1"/>
    <property type="match status" value="1"/>
</dbReference>
<dbReference type="Pfam" id="PF01926">
    <property type="entry name" value="MMR_HSR1"/>
    <property type="match status" value="1"/>
</dbReference>
<dbReference type="Pfam" id="PF06071">
    <property type="entry name" value="YchF-GTPase_C"/>
    <property type="match status" value="1"/>
</dbReference>
<dbReference type="PIRSF" id="PIRSF006641">
    <property type="entry name" value="CHP00092"/>
    <property type="match status" value="1"/>
</dbReference>
<dbReference type="PRINTS" id="PR00326">
    <property type="entry name" value="GTP1OBG"/>
</dbReference>
<dbReference type="SUPFAM" id="SSF52540">
    <property type="entry name" value="P-loop containing nucleoside triphosphate hydrolases"/>
    <property type="match status" value="1"/>
</dbReference>
<dbReference type="SUPFAM" id="SSF81271">
    <property type="entry name" value="TGS-like"/>
    <property type="match status" value="1"/>
</dbReference>
<dbReference type="PROSITE" id="PS51710">
    <property type="entry name" value="G_OBG"/>
    <property type="match status" value="1"/>
</dbReference>
<dbReference type="PROSITE" id="PS51880">
    <property type="entry name" value="TGS"/>
    <property type="match status" value="1"/>
</dbReference>
<gene>
    <name type="ORF">SPAC27E2.03c</name>
</gene>
<reference key="1">
    <citation type="journal article" date="2002" name="Nature">
        <title>The genome sequence of Schizosaccharomyces pombe.</title>
        <authorList>
            <person name="Wood V."/>
            <person name="Gwilliam R."/>
            <person name="Rajandream M.A."/>
            <person name="Lyne M.H."/>
            <person name="Lyne R."/>
            <person name="Stewart A."/>
            <person name="Sgouros J.G."/>
            <person name="Peat N."/>
            <person name="Hayles J."/>
            <person name="Baker S.G."/>
            <person name="Basham D."/>
            <person name="Bowman S."/>
            <person name="Brooks K."/>
            <person name="Brown D."/>
            <person name="Brown S."/>
            <person name="Chillingworth T."/>
            <person name="Churcher C.M."/>
            <person name="Collins M."/>
            <person name="Connor R."/>
            <person name="Cronin A."/>
            <person name="Davis P."/>
            <person name="Feltwell T."/>
            <person name="Fraser A."/>
            <person name="Gentles S."/>
            <person name="Goble A."/>
            <person name="Hamlin N."/>
            <person name="Harris D.E."/>
            <person name="Hidalgo J."/>
            <person name="Hodgson G."/>
            <person name="Holroyd S."/>
            <person name="Hornsby T."/>
            <person name="Howarth S."/>
            <person name="Huckle E.J."/>
            <person name="Hunt S."/>
            <person name="Jagels K."/>
            <person name="James K.D."/>
            <person name="Jones L."/>
            <person name="Jones M."/>
            <person name="Leather S."/>
            <person name="McDonald S."/>
            <person name="McLean J."/>
            <person name="Mooney P."/>
            <person name="Moule S."/>
            <person name="Mungall K.L."/>
            <person name="Murphy L.D."/>
            <person name="Niblett D."/>
            <person name="Odell C."/>
            <person name="Oliver K."/>
            <person name="O'Neil S."/>
            <person name="Pearson D."/>
            <person name="Quail M.A."/>
            <person name="Rabbinowitsch E."/>
            <person name="Rutherford K.M."/>
            <person name="Rutter S."/>
            <person name="Saunders D."/>
            <person name="Seeger K."/>
            <person name="Sharp S."/>
            <person name="Skelton J."/>
            <person name="Simmonds M.N."/>
            <person name="Squares R."/>
            <person name="Squares S."/>
            <person name="Stevens K."/>
            <person name="Taylor K."/>
            <person name="Taylor R.G."/>
            <person name="Tivey A."/>
            <person name="Walsh S.V."/>
            <person name="Warren T."/>
            <person name="Whitehead S."/>
            <person name="Woodward J.R."/>
            <person name="Volckaert G."/>
            <person name="Aert R."/>
            <person name="Robben J."/>
            <person name="Grymonprez B."/>
            <person name="Weltjens I."/>
            <person name="Vanstreels E."/>
            <person name="Rieger M."/>
            <person name="Schaefer M."/>
            <person name="Mueller-Auer S."/>
            <person name="Gabel C."/>
            <person name="Fuchs M."/>
            <person name="Duesterhoeft A."/>
            <person name="Fritzc C."/>
            <person name="Holzer E."/>
            <person name="Moestl D."/>
            <person name="Hilbert H."/>
            <person name="Borzym K."/>
            <person name="Langer I."/>
            <person name="Beck A."/>
            <person name="Lehrach H."/>
            <person name="Reinhardt R."/>
            <person name="Pohl T.M."/>
            <person name="Eger P."/>
            <person name="Zimmermann W."/>
            <person name="Wedler H."/>
            <person name="Wambutt R."/>
            <person name="Purnelle B."/>
            <person name="Goffeau A."/>
            <person name="Cadieu E."/>
            <person name="Dreano S."/>
            <person name="Gloux S."/>
            <person name="Lelaure V."/>
            <person name="Mottier S."/>
            <person name="Galibert F."/>
            <person name="Aves S.J."/>
            <person name="Xiang Z."/>
            <person name="Hunt C."/>
            <person name="Moore K."/>
            <person name="Hurst S.M."/>
            <person name="Lucas M."/>
            <person name="Rochet M."/>
            <person name="Gaillardin C."/>
            <person name="Tallada V.A."/>
            <person name="Garzon A."/>
            <person name="Thode G."/>
            <person name="Daga R.R."/>
            <person name="Cruzado L."/>
            <person name="Jimenez J."/>
            <person name="Sanchez M."/>
            <person name="del Rey F."/>
            <person name="Benito J."/>
            <person name="Dominguez A."/>
            <person name="Revuelta J.L."/>
            <person name="Moreno S."/>
            <person name="Armstrong J."/>
            <person name="Forsburg S.L."/>
            <person name="Cerutti L."/>
            <person name="Lowe T."/>
            <person name="McCombie W.R."/>
            <person name="Paulsen I."/>
            <person name="Potashkin J."/>
            <person name="Shpakovski G.V."/>
            <person name="Ussery D."/>
            <person name="Barrell B.G."/>
            <person name="Nurse P."/>
        </authorList>
    </citation>
    <scope>NUCLEOTIDE SEQUENCE [LARGE SCALE GENOMIC DNA]</scope>
    <source>
        <strain>972 / ATCC 24843</strain>
    </source>
</reference>
<reference key="2">
    <citation type="journal article" date="2006" name="Nat. Biotechnol.">
        <title>ORFeome cloning and global analysis of protein localization in the fission yeast Schizosaccharomyces pombe.</title>
        <authorList>
            <person name="Matsuyama A."/>
            <person name="Arai R."/>
            <person name="Yashiroda Y."/>
            <person name="Shirai A."/>
            <person name="Kamata A."/>
            <person name="Sekido S."/>
            <person name="Kobayashi Y."/>
            <person name="Hashimoto A."/>
            <person name="Hamamoto M."/>
            <person name="Hiraoka Y."/>
            <person name="Horinouchi S."/>
            <person name="Yoshida M."/>
        </authorList>
    </citation>
    <scope>SUBCELLULAR LOCATION [LARGE SCALE ANALYSIS]</scope>
</reference>
<reference key="3">
    <citation type="journal article" date="2012" name="Genome Biol.">
        <title>A systematic screen reveals new elements acting at the G2/M cell cycle control.</title>
        <authorList>
            <person name="Navarro F.J."/>
            <person name="Nurse P."/>
        </authorList>
    </citation>
    <scope>FUNCTION</scope>
</reference>
<reference key="4">
    <citation type="submission" date="2005-01" db="PDB data bank">
        <title>Structure of the s. pombe ychf GTP-binding protein.</title>
        <authorList>
            <consortium name="New York structural genomix research consortium (NYSGXRC)"/>
        </authorList>
    </citation>
    <scope>X-RAY CRYSTALLOGRAPHY (2.8 ANGSTROMS)</scope>
</reference>
<sequence length="392" mass="44333">MPPKKQQEVVKVQWGRPGNNLKTGIVGMPNVGKSTFFRAITKSVLGNPANYPYATIDPEEAKVAVPDERFDWLCEAYKPKSRVPAFLTVFDIAGLTKGASTGVGLGNAFLSHVRAVDAIYQVVRAFDDAEIIHVEGDVDPIRDLSIIVDELLIKDAEFVEKHLEGLRKITSRGANTLEMKAKKEEQAIIEKVYQYLTETKQPIRKGDWSNREVEIINSLYLLTAKPVIYLVNMSERDFLRQKNKYLPKIKKWIDENSPGDTLIPMSVAFEERLTNFTEEEAIEECKKLNTKSMLPKIIVTGYNALNLINYFTCGEDEVRSWTIRKGTKAPQAAGVIHTDFEKAFVVGEIMHYQDLFDYKTENACRAAGKYLTKGKEYVMESGDIAHWKAGKR</sequence>
<evidence type="ECO:0000250" key="1"/>
<evidence type="ECO:0000255" key="2">
    <source>
        <dbReference type="HAMAP-Rule" id="MF_03167"/>
    </source>
</evidence>
<evidence type="ECO:0000255" key="3">
    <source>
        <dbReference type="PROSITE-ProRule" id="PRU01228"/>
    </source>
</evidence>
<evidence type="ECO:0000269" key="4">
    <source>
    </source>
</evidence>
<evidence type="ECO:0000269" key="5">
    <source>
    </source>
</evidence>
<evidence type="ECO:0007829" key="6">
    <source>
        <dbReference type="PDB" id="1NI3"/>
    </source>
</evidence>
<name>OLA1_SCHPO</name>
<keyword id="KW-0002">3D-structure</keyword>
<keyword id="KW-0067">ATP-binding</keyword>
<keyword id="KW-0963">Cytoplasm</keyword>
<keyword id="KW-0378">Hydrolase</keyword>
<keyword id="KW-0460">Magnesium</keyword>
<keyword id="KW-0479">Metal-binding</keyword>
<keyword id="KW-0547">Nucleotide-binding</keyword>
<keyword id="KW-0539">Nucleus</keyword>
<keyword id="KW-1185">Reference proteome</keyword>
<proteinExistence type="evidence at protein level"/>